<evidence type="ECO:0000250" key="1"/>
<evidence type="ECO:0000250" key="2">
    <source>
        <dbReference type="UniProtKB" id="Q8CA03"/>
    </source>
</evidence>
<evidence type="ECO:0000250" key="3">
    <source>
        <dbReference type="UniProtKB" id="Q9BY10"/>
    </source>
</evidence>
<evidence type="ECO:0000255" key="4"/>
<evidence type="ECO:0000256" key="5">
    <source>
        <dbReference type="SAM" id="MobiDB-lite"/>
    </source>
</evidence>
<evidence type="ECO:0000269" key="6">
    <source>
    </source>
</evidence>
<evidence type="ECO:0000303" key="7">
    <source>
    </source>
</evidence>
<evidence type="ECO:0000305" key="8"/>
<feature type="chain" id="PRO_0000065658" description="Solute carrier family 46 member 2">
    <location>
        <begin position="1"/>
        <end position="481"/>
    </location>
</feature>
<feature type="topological domain" description="Cytoplasmic" evidence="4">
    <location>
        <begin position="1"/>
        <end position="37"/>
    </location>
</feature>
<feature type="transmembrane region" description="Helical; Name=1" evidence="4">
    <location>
        <begin position="38"/>
        <end position="58"/>
    </location>
</feature>
<feature type="topological domain" description="Extracellular" evidence="4">
    <location>
        <begin position="59"/>
        <end position="83"/>
    </location>
</feature>
<feature type="transmembrane region" description="Helical; Name=2" evidence="4">
    <location>
        <begin position="84"/>
        <end position="104"/>
    </location>
</feature>
<feature type="topological domain" description="Cytoplasmic" evidence="4">
    <location>
        <begin position="105"/>
        <end position="113"/>
    </location>
</feature>
<feature type="transmembrane region" description="Helical; Name=3" evidence="4">
    <location>
        <begin position="114"/>
        <end position="134"/>
    </location>
</feature>
<feature type="topological domain" description="Extracellular" evidence="4">
    <location>
        <begin position="135"/>
        <end position="143"/>
    </location>
</feature>
<feature type="transmembrane region" description="Helical; Name=4" evidence="4">
    <location>
        <begin position="144"/>
        <end position="164"/>
    </location>
</feature>
<feature type="topological domain" description="Cytoplasmic" evidence="4">
    <location>
        <begin position="165"/>
        <end position="179"/>
    </location>
</feature>
<feature type="transmembrane region" description="Helical; Name=5" evidence="4">
    <location>
        <begin position="180"/>
        <end position="200"/>
    </location>
</feature>
<feature type="topological domain" description="Extracellular" evidence="4">
    <location>
        <begin position="201"/>
        <end position="210"/>
    </location>
</feature>
<feature type="transmembrane region" description="Helical; Name=6" evidence="4">
    <location>
        <begin position="211"/>
        <end position="231"/>
    </location>
</feature>
<feature type="topological domain" description="Cytoplasmic" evidence="4">
    <location>
        <begin position="232"/>
        <end position="286"/>
    </location>
</feature>
<feature type="transmembrane region" description="Helical; Name=7" evidence="4">
    <location>
        <begin position="287"/>
        <end position="307"/>
    </location>
</feature>
<feature type="topological domain" description="Extracellular" evidence="4">
    <location>
        <begin position="308"/>
        <end position="326"/>
    </location>
</feature>
<feature type="transmembrane region" description="Helical; Name=8" evidence="4">
    <location>
        <begin position="327"/>
        <end position="347"/>
    </location>
</feature>
<feature type="topological domain" description="Cytoplasmic" evidence="4">
    <location>
        <begin position="348"/>
        <end position="353"/>
    </location>
</feature>
<feature type="transmembrane region" description="Helical; Name=9" evidence="4">
    <location>
        <begin position="354"/>
        <end position="374"/>
    </location>
</feature>
<feature type="topological domain" description="Extracellular" evidence="4">
    <location>
        <begin position="375"/>
        <end position="376"/>
    </location>
</feature>
<feature type="transmembrane region" description="Helical; Name=10" evidence="4">
    <location>
        <begin position="377"/>
        <end position="397"/>
    </location>
</feature>
<feature type="topological domain" description="Cytoplasmic" evidence="4">
    <location>
        <begin position="398"/>
        <end position="412"/>
    </location>
</feature>
<feature type="transmembrane region" description="Helical; Name=11" evidence="4">
    <location>
        <begin position="413"/>
        <end position="433"/>
    </location>
</feature>
<feature type="topological domain" description="Extracellular" evidence="4">
    <location>
        <begin position="434"/>
        <end position="446"/>
    </location>
</feature>
<feature type="transmembrane region" description="Helical; Name=12" evidence="4">
    <location>
        <begin position="447"/>
        <end position="467"/>
    </location>
</feature>
<feature type="topological domain" description="Cytoplasmic" evidence="4">
    <location>
        <begin position="468"/>
        <end position="481"/>
    </location>
</feature>
<feature type="region of interest" description="Disordered" evidence="5">
    <location>
        <begin position="263"/>
        <end position="282"/>
    </location>
</feature>
<feature type="glycosylation site" description="N-linked (GlcNAc...) asparagine" evidence="4">
    <location>
        <position position="61"/>
    </location>
</feature>
<feature type="splice variant" id="VSP_012656" description="In isoform 2." evidence="7">
    <original>VGYGMAAGYTIFITSFLGVLVF</original>
    <variation>LEPSCCSLSSLSQPSGQQCPNS</variation>
    <location>
        <begin position="326"/>
        <end position="347"/>
    </location>
</feature>
<feature type="splice variant" id="VSP_012657" description="In isoform 2." evidence="7">
    <location>
        <begin position="348"/>
        <end position="481"/>
    </location>
</feature>
<name>S46A2_CANLF</name>
<organism>
    <name type="scientific">Canis lupus familiaris</name>
    <name type="common">Dog</name>
    <name type="synonym">Canis familiaris</name>
    <dbReference type="NCBI Taxonomy" id="9615"/>
    <lineage>
        <taxon>Eukaryota</taxon>
        <taxon>Metazoa</taxon>
        <taxon>Chordata</taxon>
        <taxon>Craniata</taxon>
        <taxon>Vertebrata</taxon>
        <taxon>Euteleostomi</taxon>
        <taxon>Mammalia</taxon>
        <taxon>Eutheria</taxon>
        <taxon>Laurasiatheria</taxon>
        <taxon>Carnivora</taxon>
        <taxon>Caniformia</taxon>
        <taxon>Canidae</taxon>
        <taxon>Canis</taxon>
    </lineage>
</organism>
<proteinExistence type="evidence at transcript level"/>
<accession>Q866G7</accession>
<accession>Q863C5</accession>
<comment type="function">
    <text evidence="2 3 8">Proton-coupled transporter that delivers pathogen-associated or danger-associated molecular patterns to cytosolic pattern recognition receptors as part of the innate immune response to microbes or tissue injury (By similarity). Has selectivity toward muropeptides that contain the amino acid diaminopimelic acid (DAP-type peptidoglycan muropeptides) including Tri-DAP and tracheal toxin (TCT), common in Gram-negative bacteria and Gram-positive bacilli. In the context of immune recognition of skin microbiota, shuttles bacterial muropeptides across the endolysosomal membranes into the cytosol for recognition by NOD1, triggering MYD88-dependent secretion of IL1A and neutrophil recruitment in a pyroptosis-type inflammatory process (By similarity). To a lesser extent and redundantly, transports muramyl dipeptides derived from most bacterial proteoglycans, eliciting NOD2 receptor activation and downstream inflammatory responses (By similarity). Postulated to function as an importer of cyclic GMP-AMP dinucleotides (cGAMPs) in monocyte and macrophage cell lineages. Selectively imports cGAMPs derived from pathogenic bacteria such as 3'3'-cGAMP thus providing for differential immune recognition of pathogenic versus commensal bacteria. During tumorigenesis may transport extracellular tumor-derived 2'3'-cGAMP across the plasma membrane of M1-polarized macrophages to activate the anti-tumoral stimulator of interferon genes (STING) pathway (By similarity). The transport mechanism, its electrogenicity and stoichiometry remain to be elucidated (Probable).</text>
</comment>
<comment type="catalytic activity">
    <reaction evidence="3">
        <text>N-acetyl-beta-D-glucosaminyl-(1-&gt;4)-1,6-anhydro-N-acetyl-beta-D-muramoyl-L-alanyl-gamma-D-glutamyl-meso-2,6-diaminopimeloyl-D-alanine(out) + n H(+)(out) = N-acetyl-beta-D-glucosaminyl-(1-&gt;4)-1,6-anhydro-N-acetyl-beta-D-muramoyl-L-alanyl-gamma-D-glutamyl-meso-2,6-diaminopimeloyl-D-alanine(in) + n H(+)(in)</text>
        <dbReference type="Rhea" id="RHEA:76355"/>
        <dbReference type="ChEBI" id="CHEBI:15378"/>
        <dbReference type="ChEBI" id="CHEBI:195208"/>
    </reaction>
    <physiologicalReaction direction="left-to-right" evidence="3">
        <dbReference type="Rhea" id="RHEA:76356"/>
    </physiologicalReaction>
</comment>
<comment type="catalytic activity">
    <reaction evidence="2">
        <text>L-alanyl-gamma-D-glutamyl-meso-2,6-diaminopimelate(out) + n H(+)(out) = L-alanyl-gamma-D-glutamyl-meso-2,6-diaminopimelate(in) + n H(+)(in)</text>
        <dbReference type="Rhea" id="RHEA:64412"/>
        <dbReference type="ChEBI" id="CHEBI:15378"/>
        <dbReference type="ChEBI" id="CHEBI:61401"/>
    </reaction>
    <physiologicalReaction direction="left-to-right" evidence="2">
        <dbReference type="Rhea" id="RHEA:64413"/>
    </physiologicalReaction>
</comment>
<comment type="catalytic activity">
    <reaction evidence="3">
        <text>N-acetyl-D-muramoyl-L-alanyl-D-isoglutamine(out) + n H(+)(out) = N-acetyl-D-muramoyl-L-alanyl-D-isoglutamine(in) + n H(+)(in)</text>
        <dbReference type="Rhea" id="RHEA:76371"/>
        <dbReference type="ChEBI" id="CHEBI:15378"/>
        <dbReference type="ChEBI" id="CHEBI:155830"/>
    </reaction>
    <physiologicalReaction direction="left-to-right" evidence="3">
        <dbReference type="Rhea" id="RHEA:76372"/>
    </physiologicalReaction>
</comment>
<comment type="catalytic activity">
    <reaction evidence="3">
        <text>2',3'-cGAMP(out) + n H(+)(out) = 2',3'-cGAMP(in) + n H(+)(in)</text>
        <dbReference type="Rhea" id="RHEA:76411"/>
        <dbReference type="ChEBI" id="CHEBI:15378"/>
        <dbReference type="ChEBI" id="CHEBI:143093"/>
    </reaction>
    <physiologicalReaction direction="left-to-right" evidence="3">
        <dbReference type="Rhea" id="RHEA:76412"/>
    </physiologicalReaction>
</comment>
<comment type="catalytic activity">
    <reaction evidence="3">
        <text>3',3'-cGAMP(out) + n H(+)(out) = 3',3'-cGAMP(in) + n H(+)(in)</text>
        <dbReference type="Rhea" id="RHEA:76415"/>
        <dbReference type="ChEBI" id="CHEBI:15378"/>
        <dbReference type="ChEBI" id="CHEBI:71501"/>
    </reaction>
    <physiologicalReaction direction="left-to-right" evidence="3">
        <dbReference type="Rhea" id="RHEA:76416"/>
    </physiologicalReaction>
</comment>
<comment type="subcellular location">
    <subcellularLocation>
        <location evidence="3">Endosome membrane</location>
        <topology evidence="4">Multi-pass membrane protein</topology>
    </subcellularLocation>
    <subcellularLocation>
        <location evidence="3">Cell membrane</location>
        <topology evidence="3">Multi-pass membrane protein</topology>
    </subcellularLocation>
    <text evidence="3">Localizes in acidic vesicles likely late endosomes and/or endolysosomes.</text>
</comment>
<comment type="alternative products">
    <event type="alternative splicing"/>
    <isoform>
        <id>Q866G7-1</id>
        <name>1</name>
        <sequence type="displayed"/>
    </isoform>
    <isoform>
        <id>Q866G7-2</id>
        <name>2</name>
        <sequence type="described" ref="VSP_012656 VSP_012657"/>
    </isoform>
</comment>
<comment type="tissue specificity">
    <text evidence="6">Highly expressed by the epididymal duct epithelium.</text>
</comment>
<comment type="PTM">
    <text evidence="1">Glycosylated.</text>
</comment>
<comment type="similarity">
    <text evidence="8">Belongs to the major facilitator superfamily. SLC46A family.</text>
</comment>
<dbReference type="EMBL" id="AY195876">
    <property type="protein sequence ID" value="AAO23670.1"/>
    <property type="molecule type" value="mRNA"/>
</dbReference>
<dbReference type="EMBL" id="AY225149">
    <property type="protein sequence ID" value="AAO65959.1"/>
    <property type="molecule type" value="mRNA"/>
</dbReference>
<dbReference type="RefSeq" id="NP_001002997.1">
    <molecule id="Q866G7-1"/>
    <property type="nucleotide sequence ID" value="NM_001002997.1"/>
</dbReference>
<dbReference type="SMR" id="Q866G7"/>
<dbReference type="FunCoup" id="Q866G7">
    <property type="interactions" value="1"/>
</dbReference>
<dbReference type="STRING" id="9615.ENSCAFP00000004557"/>
<dbReference type="GlyCosmos" id="Q866G7">
    <property type="glycosylation" value="1 site, No reported glycans"/>
</dbReference>
<dbReference type="PaxDb" id="9612-ENSCAFP00000004557"/>
<dbReference type="Ensembl" id="ENSCAFT00030045438.1">
    <molecule id="Q866G7-1"/>
    <property type="protein sequence ID" value="ENSCAFP00030039682.1"/>
    <property type="gene ID" value="ENSCAFG00030024680.1"/>
</dbReference>
<dbReference type="Ensembl" id="ENSCAFT00040029685.1">
    <molecule id="Q866G7-1"/>
    <property type="protein sequence ID" value="ENSCAFP00040025787.1"/>
    <property type="gene ID" value="ENSCAFG00040016120.1"/>
</dbReference>
<dbReference type="Ensembl" id="ENSCAFT00845012546.1">
    <molecule id="Q866G7-1"/>
    <property type="protein sequence ID" value="ENSCAFP00845009800.1"/>
    <property type="gene ID" value="ENSCAFG00845006936.1"/>
</dbReference>
<dbReference type="GeneID" id="403501"/>
<dbReference type="KEGG" id="cfa:403501"/>
<dbReference type="CTD" id="57864"/>
<dbReference type="VEuPathDB" id="HostDB:ENSCAFG00845006936"/>
<dbReference type="eggNOG" id="KOG2816">
    <property type="taxonomic scope" value="Eukaryota"/>
</dbReference>
<dbReference type="GeneTree" id="ENSGT00950000183096"/>
<dbReference type="InParanoid" id="Q866G7"/>
<dbReference type="OrthoDB" id="430300at2759"/>
<dbReference type="Proteomes" id="UP000002254">
    <property type="component" value="Unplaced"/>
</dbReference>
<dbReference type="Proteomes" id="UP000694429">
    <property type="component" value="Chromosome 11"/>
</dbReference>
<dbReference type="Proteomes" id="UP000694542">
    <property type="component" value="Chromosome 11"/>
</dbReference>
<dbReference type="Proteomes" id="UP000805418">
    <property type="component" value="Chromosome 11"/>
</dbReference>
<dbReference type="GO" id="GO:0009986">
    <property type="term" value="C:cell surface"/>
    <property type="evidence" value="ECO:0007669"/>
    <property type="project" value="Ensembl"/>
</dbReference>
<dbReference type="GO" id="GO:0010008">
    <property type="term" value="C:endosome membrane"/>
    <property type="evidence" value="ECO:0007669"/>
    <property type="project" value="UniProtKB-SubCell"/>
</dbReference>
<dbReference type="GO" id="GO:0016020">
    <property type="term" value="C:membrane"/>
    <property type="evidence" value="ECO:0000318"/>
    <property type="project" value="GO_Central"/>
</dbReference>
<dbReference type="GO" id="GO:0005886">
    <property type="term" value="C:plasma membrane"/>
    <property type="evidence" value="ECO:0000250"/>
    <property type="project" value="UniProtKB"/>
</dbReference>
<dbReference type="GO" id="GO:0140360">
    <property type="term" value="F:cyclic-GMP-AMP transmembrane transporter activity"/>
    <property type="evidence" value="ECO:0000250"/>
    <property type="project" value="UniProtKB"/>
</dbReference>
<dbReference type="GO" id="GO:0022857">
    <property type="term" value="F:transmembrane transporter activity"/>
    <property type="evidence" value="ECO:0000318"/>
    <property type="project" value="GO_Central"/>
</dbReference>
<dbReference type="GO" id="GO:0140361">
    <property type="term" value="P:cyclic-GMP-AMP transmembrane import across plasma membrane"/>
    <property type="evidence" value="ECO:0000250"/>
    <property type="project" value="UniProtKB"/>
</dbReference>
<dbReference type="GO" id="GO:0070233">
    <property type="term" value="P:negative regulation of T cell apoptotic process"/>
    <property type="evidence" value="ECO:0007669"/>
    <property type="project" value="Ensembl"/>
</dbReference>
<dbReference type="GO" id="GO:0070430">
    <property type="term" value="P:positive regulation of nucleotide-binding oligomerization domain containing 1 signaling pathway"/>
    <property type="evidence" value="ECO:0007669"/>
    <property type="project" value="Ensembl"/>
</dbReference>
<dbReference type="GO" id="GO:0045580">
    <property type="term" value="P:regulation of T cell differentiation"/>
    <property type="evidence" value="ECO:0007669"/>
    <property type="project" value="Ensembl"/>
</dbReference>
<dbReference type="GO" id="GO:0043029">
    <property type="term" value="P:T cell homeostasis"/>
    <property type="evidence" value="ECO:0007669"/>
    <property type="project" value="Ensembl"/>
</dbReference>
<dbReference type="GO" id="GO:0048538">
    <property type="term" value="P:thymus development"/>
    <property type="evidence" value="ECO:0007669"/>
    <property type="project" value="Ensembl"/>
</dbReference>
<dbReference type="GO" id="GO:0055085">
    <property type="term" value="P:transmembrane transport"/>
    <property type="evidence" value="ECO:0000318"/>
    <property type="project" value="GO_Central"/>
</dbReference>
<dbReference type="CDD" id="cd17450">
    <property type="entry name" value="MFS_SLC46A2_TSCOT"/>
    <property type="match status" value="1"/>
</dbReference>
<dbReference type="Gene3D" id="1.20.1250.20">
    <property type="entry name" value="MFS general substrate transporter like domains"/>
    <property type="match status" value="1"/>
</dbReference>
<dbReference type="InterPro" id="IPR011701">
    <property type="entry name" value="MFS"/>
</dbReference>
<dbReference type="InterPro" id="IPR036259">
    <property type="entry name" value="MFS_trans_sf"/>
</dbReference>
<dbReference type="InterPro" id="IPR001958">
    <property type="entry name" value="Tet-R_TetA/multi-R_MdtG-like"/>
</dbReference>
<dbReference type="PANTHER" id="PTHR23507:SF3">
    <property type="entry name" value="THYMIC STROMAL COTRANSPORTER HOMOLOG"/>
    <property type="match status" value="1"/>
</dbReference>
<dbReference type="PANTHER" id="PTHR23507">
    <property type="entry name" value="ZGC:174356"/>
    <property type="match status" value="1"/>
</dbReference>
<dbReference type="Pfam" id="PF07690">
    <property type="entry name" value="MFS_1"/>
    <property type="match status" value="1"/>
</dbReference>
<dbReference type="PRINTS" id="PR01035">
    <property type="entry name" value="TCRTETA"/>
</dbReference>
<dbReference type="SUPFAM" id="SSF103473">
    <property type="entry name" value="MFS general substrate transporter"/>
    <property type="match status" value="1"/>
</dbReference>
<reference key="1">
    <citation type="journal article" date="2003" name="J. Androl.">
        <title>A putative 12-transmembrane domain cotransporter associated with apical membranes of the epididymal duct.</title>
        <authorList>
            <person name="Obermann H."/>
            <person name="Wingbermuhle A."/>
            <person name="Munz S."/>
            <person name="Kirchhoff C."/>
        </authorList>
    </citation>
    <scope>NUCLEOTIDE SEQUENCE [MRNA] (ISOFORMS 1 AND 2)</scope>
    <scope>POSSIBLE FUNCTION</scope>
    <scope>TISSUE SPECIFICITY</scope>
    <source>
        <tissue>Epididymis</tissue>
    </source>
</reference>
<sequence length="481" mass="50701">MGPEAAGPGRGAAPRLQVRTWIEPVVAATQVASSLYEAGLLLVVKASFGAGAGAGAGAASNHSAGPPRGAPEDQQQRAISNFYIVYNLVVGLTPLLSAYALGWLSDRRHRKVAICVALLGFLLSRVGLLLKVLLDWPVEVLYGAAALNGLCGGFSAFWAGVMALGSLGSSEGRRSVRLVLIDLILGLAGFCGSMASGHLFKQVAGHSGQGLVLTACSVSCATFALLYSLLVLKVPEAAAGSGQALSAGDSVAGTVGTYRTLDPDHSDKQSVQGLHPPSPGKAKPRRTIIALLFLGAIVYDLAVVGTVDVMPLFVLREPLSWNQVQVGYGMAAGYTIFITSFLGVLVFSRCFQDTTMIMIGMVSFGSGALLLAFVKETYMFYIARAVMLFALIPITTIRSAMSKLIKGSSYGKVFVILQLSLTLTGVVTSTVYNKIYQVTMEKFIGTCFALSSFLSFLAIIPIGIVAYKQASWLQYGDVRET</sequence>
<protein>
    <recommendedName>
        <fullName>Solute carrier family 46 member 2</fullName>
    </recommendedName>
    <alternativeName>
        <fullName>CE11</fullName>
    </alternativeName>
    <alternativeName>
        <fullName>Thymic stromal cotransporter homolog</fullName>
    </alternativeName>
</protein>
<gene>
    <name evidence="3" type="primary">SLC46A2</name>
    <name evidence="3" type="synonym">TSCOT</name>
</gene>
<keyword id="KW-0025">Alternative splicing</keyword>
<keyword id="KW-1003">Cell membrane</keyword>
<keyword id="KW-0967">Endosome</keyword>
<keyword id="KW-0325">Glycoprotein</keyword>
<keyword id="KW-0472">Membrane</keyword>
<keyword id="KW-1185">Reference proteome</keyword>
<keyword id="KW-0812">Transmembrane</keyword>
<keyword id="KW-1133">Transmembrane helix</keyword>
<keyword id="KW-0813">Transport</keyword>